<accession>Q4UM17</accession>
<feature type="chain" id="PRO_0000244162" description="Ribosome maturation factor RimM">
    <location>
        <begin position="1"/>
        <end position="165"/>
    </location>
</feature>
<feature type="domain" description="PRC barrel" evidence="1">
    <location>
        <begin position="94"/>
        <end position="165"/>
    </location>
</feature>
<gene>
    <name evidence="1" type="primary">rimM</name>
    <name type="ordered locus">RF_0555</name>
</gene>
<comment type="function">
    <text evidence="1">An accessory protein needed during the final step in the assembly of 30S ribosomal subunit, possibly for assembly of the head region. Essential for efficient processing of 16S rRNA. May be needed both before and after RbfA during the maturation of 16S rRNA. It has affinity for free ribosomal 30S subunits but not for 70S ribosomes.</text>
</comment>
<comment type="subunit">
    <text evidence="1">Binds ribosomal protein uS19.</text>
</comment>
<comment type="subcellular location">
    <subcellularLocation>
        <location evidence="1">Cytoplasm</location>
    </subcellularLocation>
</comment>
<comment type="domain">
    <text evidence="1">The PRC barrel domain binds ribosomal protein uS19.</text>
</comment>
<comment type="similarity">
    <text evidence="1">Belongs to the RimM family.</text>
</comment>
<proteinExistence type="inferred from homology"/>
<protein>
    <recommendedName>
        <fullName evidence="1">Ribosome maturation factor RimM</fullName>
    </recommendedName>
</protein>
<name>RIMM_RICFE</name>
<evidence type="ECO:0000255" key="1">
    <source>
        <dbReference type="HAMAP-Rule" id="MF_00014"/>
    </source>
</evidence>
<keyword id="KW-0143">Chaperone</keyword>
<keyword id="KW-0963">Cytoplasm</keyword>
<keyword id="KW-0690">Ribosome biogenesis</keyword>
<keyword id="KW-0698">rRNA processing</keyword>
<sequence>MNSLENLILVGVIKSCHGIKGHVILKSFTEPATKILERNLVNESGEDIHIKLISQNTKGELICTFNDIATRNEAENLKGYKLFCLRASLPKLEEDEFYIADLNHLPVLNQDHKEIGKIKNILNFGAGDIIEIEFLDQTTELLPFNKEFIPLITKDYVVLNYQREI</sequence>
<organism>
    <name type="scientific">Rickettsia felis (strain ATCC VR-1525 / URRWXCal2)</name>
    <name type="common">Rickettsia azadi</name>
    <dbReference type="NCBI Taxonomy" id="315456"/>
    <lineage>
        <taxon>Bacteria</taxon>
        <taxon>Pseudomonadati</taxon>
        <taxon>Pseudomonadota</taxon>
        <taxon>Alphaproteobacteria</taxon>
        <taxon>Rickettsiales</taxon>
        <taxon>Rickettsiaceae</taxon>
        <taxon>Rickettsieae</taxon>
        <taxon>Rickettsia</taxon>
        <taxon>spotted fever group</taxon>
    </lineage>
</organism>
<reference key="1">
    <citation type="journal article" date="2005" name="PLoS Biol.">
        <title>The genome sequence of Rickettsia felis identifies the first putative conjugative plasmid in an obligate intracellular parasite.</title>
        <authorList>
            <person name="Ogata H."/>
            <person name="Renesto P."/>
            <person name="Audic S."/>
            <person name="Robert C."/>
            <person name="Blanc G."/>
            <person name="Fournier P.-E."/>
            <person name="Parinello H."/>
            <person name="Claverie J.-M."/>
            <person name="Raoult D."/>
        </authorList>
    </citation>
    <scope>NUCLEOTIDE SEQUENCE [LARGE SCALE GENOMIC DNA]</scope>
    <source>
        <strain>ATCC VR-1525 / URRWXCal2</strain>
    </source>
</reference>
<dbReference type="EMBL" id="CP000053">
    <property type="protein sequence ID" value="AAY61406.1"/>
    <property type="molecule type" value="Genomic_DNA"/>
</dbReference>
<dbReference type="SMR" id="Q4UM17"/>
<dbReference type="STRING" id="315456.RF_0555"/>
<dbReference type="KEGG" id="rfe:RF_0555"/>
<dbReference type="eggNOG" id="COG0806">
    <property type="taxonomic scope" value="Bacteria"/>
</dbReference>
<dbReference type="HOGENOM" id="CLU_077636_0_1_5"/>
<dbReference type="OrthoDB" id="9788191at2"/>
<dbReference type="Proteomes" id="UP000008548">
    <property type="component" value="Chromosome"/>
</dbReference>
<dbReference type="GO" id="GO:0005737">
    <property type="term" value="C:cytoplasm"/>
    <property type="evidence" value="ECO:0007669"/>
    <property type="project" value="UniProtKB-SubCell"/>
</dbReference>
<dbReference type="GO" id="GO:0005840">
    <property type="term" value="C:ribosome"/>
    <property type="evidence" value="ECO:0007669"/>
    <property type="project" value="InterPro"/>
</dbReference>
<dbReference type="GO" id="GO:0043022">
    <property type="term" value="F:ribosome binding"/>
    <property type="evidence" value="ECO:0007669"/>
    <property type="project" value="InterPro"/>
</dbReference>
<dbReference type="GO" id="GO:0042274">
    <property type="term" value="P:ribosomal small subunit biogenesis"/>
    <property type="evidence" value="ECO:0007669"/>
    <property type="project" value="UniProtKB-UniRule"/>
</dbReference>
<dbReference type="GO" id="GO:0006364">
    <property type="term" value="P:rRNA processing"/>
    <property type="evidence" value="ECO:0007669"/>
    <property type="project" value="UniProtKB-UniRule"/>
</dbReference>
<dbReference type="Gene3D" id="2.30.30.240">
    <property type="entry name" value="PRC-barrel domain"/>
    <property type="match status" value="1"/>
</dbReference>
<dbReference type="Gene3D" id="2.40.30.60">
    <property type="entry name" value="RimM"/>
    <property type="match status" value="1"/>
</dbReference>
<dbReference type="HAMAP" id="MF_00014">
    <property type="entry name" value="Ribosome_mat_RimM"/>
    <property type="match status" value="1"/>
</dbReference>
<dbReference type="InterPro" id="IPR027275">
    <property type="entry name" value="PRC-brl_dom"/>
</dbReference>
<dbReference type="InterPro" id="IPR011033">
    <property type="entry name" value="PRC_barrel-like_sf"/>
</dbReference>
<dbReference type="InterPro" id="IPR011961">
    <property type="entry name" value="RimM"/>
</dbReference>
<dbReference type="InterPro" id="IPR002676">
    <property type="entry name" value="RimM_N"/>
</dbReference>
<dbReference type="InterPro" id="IPR036976">
    <property type="entry name" value="RimM_N_sf"/>
</dbReference>
<dbReference type="InterPro" id="IPR009000">
    <property type="entry name" value="Transl_B-barrel_sf"/>
</dbReference>
<dbReference type="NCBIfam" id="TIGR02273">
    <property type="entry name" value="16S_RimM"/>
    <property type="match status" value="1"/>
</dbReference>
<dbReference type="PANTHER" id="PTHR33692">
    <property type="entry name" value="RIBOSOME MATURATION FACTOR RIMM"/>
    <property type="match status" value="1"/>
</dbReference>
<dbReference type="PANTHER" id="PTHR33692:SF1">
    <property type="entry name" value="RIBOSOME MATURATION FACTOR RIMM"/>
    <property type="match status" value="1"/>
</dbReference>
<dbReference type="Pfam" id="PF05239">
    <property type="entry name" value="PRC"/>
    <property type="match status" value="1"/>
</dbReference>
<dbReference type="Pfam" id="PF01782">
    <property type="entry name" value="RimM"/>
    <property type="match status" value="1"/>
</dbReference>
<dbReference type="SUPFAM" id="SSF50346">
    <property type="entry name" value="PRC-barrel domain"/>
    <property type="match status" value="1"/>
</dbReference>
<dbReference type="SUPFAM" id="SSF50447">
    <property type="entry name" value="Translation proteins"/>
    <property type="match status" value="1"/>
</dbReference>